<reference key="1">
    <citation type="journal article" date="2006" name="PLoS Genet.">
        <title>The complete genome sequence and comparative genome analysis of the high pathogenicity Yersinia enterocolitica strain 8081.</title>
        <authorList>
            <person name="Thomson N.R."/>
            <person name="Howard S."/>
            <person name="Wren B.W."/>
            <person name="Holden M.T.G."/>
            <person name="Crossman L."/>
            <person name="Challis G.L."/>
            <person name="Churcher C."/>
            <person name="Mungall K."/>
            <person name="Brooks K."/>
            <person name="Chillingworth T."/>
            <person name="Feltwell T."/>
            <person name="Abdellah Z."/>
            <person name="Hauser H."/>
            <person name="Jagels K."/>
            <person name="Maddison M."/>
            <person name="Moule S."/>
            <person name="Sanders M."/>
            <person name="Whitehead S."/>
            <person name="Quail M.A."/>
            <person name="Dougan G."/>
            <person name="Parkhill J."/>
            <person name="Prentice M.B."/>
        </authorList>
    </citation>
    <scope>NUCLEOTIDE SEQUENCE [LARGE SCALE GENOMIC DNA]</scope>
    <source>
        <strain>NCTC 13174 / 8081</strain>
    </source>
</reference>
<keyword id="KW-0997">Cell inner membrane</keyword>
<keyword id="KW-1003">Cell membrane</keyword>
<keyword id="KW-0963">Cytoplasm</keyword>
<keyword id="KW-0342">GTP-binding</keyword>
<keyword id="KW-0472">Membrane</keyword>
<keyword id="KW-0547">Nucleotide-binding</keyword>
<keyword id="KW-0690">Ribosome biogenesis</keyword>
<keyword id="KW-0694">RNA-binding</keyword>
<keyword id="KW-0699">rRNA-binding</keyword>
<name>ERA_YERE8</name>
<gene>
    <name evidence="1" type="primary">era</name>
    <name type="ordered locus">YE1018</name>
</gene>
<sequence>MSEVEKTYCGFIAIVGRPNVGKSTLLNELLGQKISITSRKPQTTRHRIMGIHTEGPYQAIYVDTPGLHIEEKRAINRLMNRAASSSIGDVELVIFVVEGTNWTADDEMVVNKLRSLQCPVLLAINKVDNVTDKTKLLPHIQFLSQQMNFLDVVPISAEKGMNVDTIASIVRKHMPEADHHFPEDYITDRSQRFMASEIIREKLMRFLGEELPYSVTVEIEQFVPNERGGYNIHGLILVEREGQKKMVIGNKGSKIKTIGIEARQDMEQMFEAKVHLELWVKVKSGWADDERALRSLGYTDDLK</sequence>
<feature type="chain" id="PRO_1000079772" description="GTPase Era">
    <location>
        <begin position="1"/>
        <end position="303"/>
    </location>
</feature>
<feature type="domain" description="Era-type G" evidence="2">
    <location>
        <begin position="8"/>
        <end position="176"/>
    </location>
</feature>
<feature type="domain" description="KH type-2" evidence="1">
    <location>
        <begin position="207"/>
        <end position="284"/>
    </location>
</feature>
<feature type="region of interest" description="G1" evidence="2">
    <location>
        <begin position="16"/>
        <end position="23"/>
    </location>
</feature>
<feature type="region of interest" description="G2" evidence="2">
    <location>
        <begin position="42"/>
        <end position="46"/>
    </location>
</feature>
<feature type="region of interest" description="G3" evidence="2">
    <location>
        <begin position="63"/>
        <end position="66"/>
    </location>
</feature>
<feature type="region of interest" description="G4" evidence="2">
    <location>
        <begin position="125"/>
        <end position="128"/>
    </location>
</feature>
<feature type="region of interest" description="G5" evidence="2">
    <location>
        <begin position="155"/>
        <end position="157"/>
    </location>
</feature>
<feature type="binding site" evidence="1">
    <location>
        <begin position="16"/>
        <end position="23"/>
    </location>
    <ligand>
        <name>GTP</name>
        <dbReference type="ChEBI" id="CHEBI:37565"/>
    </ligand>
</feature>
<feature type="binding site" evidence="1">
    <location>
        <begin position="63"/>
        <end position="67"/>
    </location>
    <ligand>
        <name>GTP</name>
        <dbReference type="ChEBI" id="CHEBI:37565"/>
    </ligand>
</feature>
<feature type="binding site" evidence="1">
    <location>
        <begin position="125"/>
        <end position="128"/>
    </location>
    <ligand>
        <name>GTP</name>
        <dbReference type="ChEBI" id="CHEBI:37565"/>
    </ligand>
</feature>
<proteinExistence type="inferred from homology"/>
<organism>
    <name type="scientific">Yersinia enterocolitica serotype O:8 / biotype 1B (strain NCTC 13174 / 8081)</name>
    <dbReference type="NCBI Taxonomy" id="393305"/>
    <lineage>
        <taxon>Bacteria</taxon>
        <taxon>Pseudomonadati</taxon>
        <taxon>Pseudomonadota</taxon>
        <taxon>Gammaproteobacteria</taxon>
        <taxon>Enterobacterales</taxon>
        <taxon>Yersiniaceae</taxon>
        <taxon>Yersinia</taxon>
    </lineage>
</organism>
<comment type="function">
    <text evidence="1">An essential GTPase that binds both GDP and GTP, with rapid nucleotide exchange. Plays a role in 16S rRNA processing and 30S ribosomal subunit biogenesis and possibly also in cell cycle regulation and energy metabolism.</text>
</comment>
<comment type="subunit">
    <text evidence="1">Monomer.</text>
</comment>
<comment type="subcellular location">
    <subcellularLocation>
        <location>Cytoplasm</location>
    </subcellularLocation>
    <subcellularLocation>
        <location evidence="1">Cell inner membrane</location>
        <topology evidence="1">Peripheral membrane protein</topology>
    </subcellularLocation>
</comment>
<comment type="similarity">
    <text evidence="1 2">Belongs to the TRAFAC class TrmE-Era-EngA-EngB-Septin-like GTPase superfamily. Era GTPase family.</text>
</comment>
<evidence type="ECO:0000255" key="1">
    <source>
        <dbReference type="HAMAP-Rule" id="MF_00367"/>
    </source>
</evidence>
<evidence type="ECO:0000255" key="2">
    <source>
        <dbReference type="PROSITE-ProRule" id="PRU01050"/>
    </source>
</evidence>
<protein>
    <recommendedName>
        <fullName evidence="1">GTPase Era</fullName>
    </recommendedName>
</protein>
<accession>A1JKK4</accession>
<dbReference type="EMBL" id="AM286415">
    <property type="protein sequence ID" value="CAL11116.1"/>
    <property type="molecule type" value="Genomic_DNA"/>
</dbReference>
<dbReference type="RefSeq" id="WP_005159414.1">
    <property type="nucleotide sequence ID" value="NC_008800.1"/>
</dbReference>
<dbReference type="RefSeq" id="YP_001005351.1">
    <property type="nucleotide sequence ID" value="NC_008800.1"/>
</dbReference>
<dbReference type="SMR" id="A1JKK4"/>
<dbReference type="GeneID" id="93969919"/>
<dbReference type="KEGG" id="yen:YE1018"/>
<dbReference type="PATRIC" id="fig|393305.7.peg.1114"/>
<dbReference type="eggNOG" id="COG1159">
    <property type="taxonomic scope" value="Bacteria"/>
</dbReference>
<dbReference type="HOGENOM" id="CLU_038009_1_0_6"/>
<dbReference type="OrthoDB" id="9805918at2"/>
<dbReference type="Proteomes" id="UP000000642">
    <property type="component" value="Chromosome"/>
</dbReference>
<dbReference type="GO" id="GO:0005829">
    <property type="term" value="C:cytosol"/>
    <property type="evidence" value="ECO:0007669"/>
    <property type="project" value="TreeGrafter"/>
</dbReference>
<dbReference type="GO" id="GO:0005886">
    <property type="term" value="C:plasma membrane"/>
    <property type="evidence" value="ECO:0007669"/>
    <property type="project" value="UniProtKB-SubCell"/>
</dbReference>
<dbReference type="GO" id="GO:0005525">
    <property type="term" value="F:GTP binding"/>
    <property type="evidence" value="ECO:0007669"/>
    <property type="project" value="UniProtKB-UniRule"/>
</dbReference>
<dbReference type="GO" id="GO:0003924">
    <property type="term" value="F:GTPase activity"/>
    <property type="evidence" value="ECO:0007669"/>
    <property type="project" value="UniProtKB-UniRule"/>
</dbReference>
<dbReference type="GO" id="GO:0043024">
    <property type="term" value="F:ribosomal small subunit binding"/>
    <property type="evidence" value="ECO:0007669"/>
    <property type="project" value="TreeGrafter"/>
</dbReference>
<dbReference type="GO" id="GO:0070181">
    <property type="term" value="F:small ribosomal subunit rRNA binding"/>
    <property type="evidence" value="ECO:0007669"/>
    <property type="project" value="UniProtKB-UniRule"/>
</dbReference>
<dbReference type="GO" id="GO:0000028">
    <property type="term" value="P:ribosomal small subunit assembly"/>
    <property type="evidence" value="ECO:0007669"/>
    <property type="project" value="TreeGrafter"/>
</dbReference>
<dbReference type="CDD" id="cd04163">
    <property type="entry name" value="Era"/>
    <property type="match status" value="1"/>
</dbReference>
<dbReference type="CDD" id="cd22534">
    <property type="entry name" value="KH-II_Era"/>
    <property type="match status" value="1"/>
</dbReference>
<dbReference type="FunFam" id="3.30.300.20:FF:000003">
    <property type="entry name" value="GTPase Era"/>
    <property type="match status" value="1"/>
</dbReference>
<dbReference type="FunFam" id="3.40.50.300:FF:000094">
    <property type="entry name" value="GTPase Era"/>
    <property type="match status" value="1"/>
</dbReference>
<dbReference type="Gene3D" id="3.30.300.20">
    <property type="match status" value="1"/>
</dbReference>
<dbReference type="Gene3D" id="3.40.50.300">
    <property type="entry name" value="P-loop containing nucleotide triphosphate hydrolases"/>
    <property type="match status" value="1"/>
</dbReference>
<dbReference type="HAMAP" id="MF_00367">
    <property type="entry name" value="GTPase_Era"/>
    <property type="match status" value="1"/>
</dbReference>
<dbReference type="InterPro" id="IPR030388">
    <property type="entry name" value="G_ERA_dom"/>
</dbReference>
<dbReference type="InterPro" id="IPR006073">
    <property type="entry name" value="GTP-bd"/>
</dbReference>
<dbReference type="InterPro" id="IPR005662">
    <property type="entry name" value="GTPase_Era-like"/>
</dbReference>
<dbReference type="InterPro" id="IPR015946">
    <property type="entry name" value="KH_dom-like_a/b"/>
</dbReference>
<dbReference type="InterPro" id="IPR004044">
    <property type="entry name" value="KH_dom_type_2"/>
</dbReference>
<dbReference type="InterPro" id="IPR009019">
    <property type="entry name" value="KH_sf_prok-type"/>
</dbReference>
<dbReference type="InterPro" id="IPR027417">
    <property type="entry name" value="P-loop_NTPase"/>
</dbReference>
<dbReference type="InterPro" id="IPR005225">
    <property type="entry name" value="Small_GTP-bd"/>
</dbReference>
<dbReference type="NCBIfam" id="TIGR00436">
    <property type="entry name" value="era"/>
    <property type="match status" value="1"/>
</dbReference>
<dbReference type="NCBIfam" id="NF000908">
    <property type="entry name" value="PRK00089.1"/>
    <property type="match status" value="1"/>
</dbReference>
<dbReference type="NCBIfam" id="TIGR00231">
    <property type="entry name" value="small_GTP"/>
    <property type="match status" value="1"/>
</dbReference>
<dbReference type="PANTHER" id="PTHR42698">
    <property type="entry name" value="GTPASE ERA"/>
    <property type="match status" value="1"/>
</dbReference>
<dbReference type="PANTHER" id="PTHR42698:SF1">
    <property type="entry name" value="GTPASE ERA, MITOCHONDRIAL"/>
    <property type="match status" value="1"/>
</dbReference>
<dbReference type="Pfam" id="PF07650">
    <property type="entry name" value="KH_2"/>
    <property type="match status" value="1"/>
</dbReference>
<dbReference type="Pfam" id="PF01926">
    <property type="entry name" value="MMR_HSR1"/>
    <property type="match status" value="1"/>
</dbReference>
<dbReference type="PRINTS" id="PR00326">
    <property type="entry name" value="GTP1OBG"/>
</dbReference>
<dbReference type="SUPFAM" id="SSF52540">
    <property type="entry name" value="P-loop containing nucleoside triphosphate hydrolases"/>
    <property type="match status" value="1"/>
</dbReference>
<dbReference type="SUPFAM" id="SSF54814">
    <property type="entry name" value="Prokaryotic type KH domain (KH-domain type II)"/>
    <property type="match status" value="1"/>
</dbReference>
<dbReference type="PROSITE" id="PS51713">
    <property type="entry name" value="G_ERA"/>
    <property type="match status" value="1"/>
</dbReference>
<dbReference type="PROSITE" id="PS50823">
    <property type="entry name" value="KH_TYPE_2"/>
    <property type="match status" value="1"/>
</dbReference>